<feature type="chain" id="PRO_1000010831" description="Elongation factor P">
    <location>
        <begin position="1"/>
        <end position="188"/>
    </location>
</feature>
<evidence type="ECO:0000255" key="1">
    <source>
        <dbReference type="HAMAP-Rule" id="MF_00141"/>
    </source>
</evidence>
<protein>
    <recommendedName>
        <fullName evidence="1">Elongation factor P</fullName>
        <shortName evidence="1">EF-P</shortName>
    </recommendedName>
</protein>
<gene>
    <name evidence="1" type="primary">efp</name>
    <name type="ordered locus">RPD_2504</name>
</gene>
<keyword id="KW-0963">Cytoplasm</keyword>
<keyword id="KW-0251">Elongation factor</keyword>
<keyword id="KW-0648">Protein biosynthesis</keyword>
<reference key="1">
    <citation type="submission" date="2006-03" db="EMBL/GenBank/DDBJ databases">
        <title>Complete sequence of Rhodopseudomonas palustris BisB5.</title>
        <authorList>
            <consortium name="US DOE Joint Genome Institute"/>
            <person name="Copeland A."/>
            <person name="Lucas S."/>
            <person name="Lapidus A."/>
            <person name="Barry K."/>
            <person name="Detter J.C."/>
            <person name="Glavina del Rio T."/>
            <person name="Hammon N."/>
            <person name="Israni S."/>
            <person name="Dalin E."/>
            <person name="Tice H."/>
            <person name="Pitluck S."/>
            <person name="Chain P."/>
            <person name="Malfatti S."/>
            <person name="Shin M."/>
            <person name="Vergez L."/>
            <person name="Schmutz J."/>
            <person name="Larimer F."/>
            <person name="Land M."/>
            <person name="Hauser L."/>
            <person name="Pelletier D.A."/>
            <person name="Kyrpides N."/>
            <person name="Lykidis A."/>
            <person name="Oda Y."/>
            <person name="Harwood C.S."/>
            <person name="Richardson P."/>
        </authorList>
    </citation>
    <scope>NUCLEOTIDE SEQUENCE [LARGE SCALE GENOMIC DNA]</scope>
    <source>
        <strain>BisB5</strain>
    </source>
</reference>
<dbReference type="EMBL" id="CP000283">
    <property type="protein sequence ID" value="ABE39734.1"/>
    <property type="molecule type" value="Genomic_DNA"/>
</dbReference>
<dbReference type="SMR" id="Q137K5"/>
<dbReference type="STRING" id="316057.RPD_2504"/>
<dbReference type="KEGG" id="rpd:RPD_2504"/>
<dbReference type="eggNOG" id="COG0231">
    <property type="taxonomic scope" value="Bacteria"/>
</dbReference>
<dbReference type="HOGENOM" id="CLU_074944_1_1_5"/>
<dbReference type="BioCyc" id="RPAL316057:RPD_RS12570-MONOMER"/>
<dbReference type="UniPathway" id="UPA00345"/>
<dbReference type="Proteomes" id="UP000001818">
    <property type="component" value="Chromosome"/>
</dbReference>
<dbReference type="GO" id="GO:0005737">
    <property type="term" value="C:cytoplasm"/>
    <property type="evidence" value="ECO:0007669"/>
    <property type="project" value="UniProtKB-SubCell"/>
</dbReference>
<dbReference type="GO" id="GO:0003746">
    <property type="term" value="F:translation elongation factor activity"/>
    <property type="evidence" value="ECO:0007669"/>
    <property type="project" value="UniProtKB-UniRule"/>
</dbReference>
<dbReference type="GO" id="GO:0043043">
    <property type="term" value="P:peptide biosynthetic process"/>
    <property type="evidence" value="ECO:0007669"/>
    <property type="project" value="InterPro"/>
</dbReference>
<dbReference type="CDD" id="cd04470">
    <property type="entry name" value="S1_EF-P_repeat_1"/>
    <property type="match status" value="1"/>
</dbReference>
<dbReference type="CDD" id="cd05794">
    <property type="entry name" value="S1_EF-P_repeat_2"/>
    <property type="match status" value="1"/>
</dbReference>
<dbReference type="FunFam" id="2.40.50.140:FF:000004">
    <property type="entry name" value="Elongation factor P"/>
    <property type="match status" value="1"/>
</dbReference>
<dbReference type="FunFam" id="2.40.50.140:FF:000009">
    <property type="entry name" value="Elongation factor P"/>
    <property type="match status" value="1"/>
</dbReference>
<dbReference type="Gene3D" id="2.30.30.30">
    <property type="match status" value="1"/>
</dbReference>
<dbReference type="Gene3D" id="2.40.50.140">
    <property type="entry name" value="Nucleic acid-binding proteins"/>
    <property type="match status" value="2"/>
</dbReference>
<dbReference type="HAMAP" id="MF_00141">
    <property type="entry name" value="EF_P"/>
    <property type="match status" value="1"/>
</dbReference>
<dbReference type="InterPro" id="IPR015365">
    <property type="entry name" value="Elong-fact-P_C"/>
</dbReference>
<dbReference type="InterPro" id="IPR012340">
    <property type="entry name" value="NA-bd_OB-fold"/>
</dbReference>
<dbReference type="InterPro" id="IPR014722">
    <property type="entry name" value="Rib_uL2_dom2"/>
</dbReference>
<dbReference type="InterPro" id="IPR020599">
    <property type="entry name" value="Transl_elong_fac_P/YeiP"/>
</dbReference>
<dbReference type="InterPro" id="IPR013185">
    <property type="entry name" value="Transl_elong_KOW-like"/>
</dbReference>
<dbReference type="InterPro" id="IPR001059">
    <property type="entry name" value="Transl_elong_P/YeiP_cen"/>
</dbReference>
<dbReference type="InterPro" id="IPR013852">
    <property type="entry name" value="Transl_elong_P/YeiP_CS"/>
</dbReference>
<dbReference type="InterPro" id="IPR011768">
    <property type="entry name" value="Transl_elongation_fac_P"/>
</dbReference>
<dbReference type="InterPro" id="IPR008991">
    <property type="entry name" value="Translation_prot_SH3-like_sf"/>
</dbReference>
<dbReference type="NCBIfam" id="TIGR00038">
    <property type="entry name" value="efp"/>
    <property type="match status" value="1"/>
</dbReference>
<dbReference type="NCBIfam" id="NF001810">
    <property type="entry name" value="PRK00529.1"/>
    <property type="match status" value="1"/>
</dbReference>
<dbReference type="PANTHER" id="PTHR30053">
    <property type="entry name" value="ELONGATION FACTOR P"/>
    <property type="match status" value="1"/>
</dbReference>
<dbReference type="PANTHER" id="PTHR30053:SF14">
    <property type="entry name" value="TRANSLATION ELONGATION FACTOR KOW-LIKE DOMAIN-CONTAINING PROTEIN"/>
    <property type="match status" value="1"/>
</dbReference>
<dbReference type="Pfam" id="PF01132">
    <property type="entry name" value="EFP"/>
    <property type="match status" value="1"/>
</dbReference>
<dbReference type="Pfam" id="PF08207">
    <property type="entry name" value="EFP_N"/>
    <property type="match status" value="1"/>
</dbReference>
<dbReference type="Pfam" id="PF09285">
    <property type="entry name" value="Elong-fact-P_C"/>
    <property type="match status" value="1"/>
</dbReference>
<dbReference type="PIRSF" id="PIRSF005901">
    <property type="entry name" value="EF-P"/>
    <property type="match status" value="1"/>
</dbReference>
<dbReference type="SMART" id="SM01185">
    <property type="entry name" value="EFP"/>
    <property type="match status" value="1"/>
</dbReference>
<dbReference type="SMART" id="SM00841">
    <property type="entry name" value="Elong-fact-P_C"/>
    <property type="match status" value="1"/>
</dbReference>
<dbReference type="SUPFAM" id="SSF50249">
    <property type="entry name" value="Nucleic acid-binding proteins"/>
    <property type="match status" value="2"/>
</dbReference>
<dbReference type="SUPFAM" id="SSF50104">
    <property type="entry name" value="Translation proteins SH3-like domain"/>
    <property type="match status" value="1"/>
</dbReference>
<dbReference type="PROSITE" id="PS01275">
    <property type="entry name" value="EFP"/>
    <property type="match status" value="1"/>
</dbReference>
<accession>Q137K5</accession>
<organism>
    <name type="scientific">Rhodopseudomonas palustris (strain BisB5)</name>
    <dbReference type="NCBI Taxonomy" id="316057"/>
    <lineage>
        <taxon>Bacteria</taxon>
        <taxon>Pseudomonadati</taxon>
        <taxon>Pseudomonadota</taxon>
        <taxon>Alphaproteobacteria</taxon>
        <taxon>Hyphomicrobiales</taxon>
        <taxon>Nitrobacteraceae</taxon>
        <taxon>Rhodopseudomonas</taxon>
    </lineage>
</organism>
<proteinExistence type="inferred from homology"/>
<comment type="function">
    <text evidence="1">Involved in peptide bond synthesis. Stimulates efficient translation and peptide-bond synthesis on native or reconstituted 70S ribosomes in vitro. Probably functions indirectly by altering the affinity of the ribosome for aminoacyl-tRNA, thus increasing their reactivity as acceptors for peptidyl transferase.</text>
</comment>
<comment type="pathway">
    <text evidence="1">Protein biosynthesis; polypeptide chain elongation.</text>
</comment>
<comment type="subcellular location">
    <subcellularLocation>
        <location evidence="1">Cytoplasm</location>
    </subcellularLocation>
</comment>
<comment type="similarity">
    <text evidence="1">Belongs to the elongation factor P family.</text>
</comment>
<sequence>MRVIASSIRKGNVLEQDGKLYVVLSAENIHPGKGTPVSQIEMRRISDGVKVSERYKTTDQVEKATIEERNYTFLYEDGEGFHFMEPESFDQVQVTKDVVGNSAPYLAENMVVKLSMHDTTAVAITLPQRATLEVVETEPVTKGQTASSSYKPAILSNGVRTAVPPHVGVGTRVVVLTEDGSYVERAKD</sequence>
<name>EFP_RHOPS</name>